<name>HUTH_BURA4</name>
<keyword id="KW-0963">Cytoplasm</keyword>
<keyword id="KW-0369">Histidine metabolism</keyword>
<keyword id="KW-0456">Lyase</keyword>
<comment type="catalytic activity">
    <reaction evidence="1">
        <text>L-histidine = trans-urocanate + NH4(+)</text>
        <dbReference type="Rhea" id="RHEA:21232"/>
        <dbReference type="ChEBI" id="CHEBI:17771"/>
        <dbReference type="ChEBI" id="CHEBI:28938"/>
        <dbReference type="ChEBI" id="CHEBI:57595"/>
        <dbReference type="EC" id="4.3.1.3"/>
    </reaction>
</comment>
<comment type="pathway">
    <text evidence="1">Amino-acid degradation; L-histidine degradation into L-glutamate; N-formimidoyl-L-glutamate from L-histidine: step 1/3.</text>
</comment>
<comment type="subcellular location">
    <subcellularLocation>
        <location evidence="1">Cytoplasm</location>
    </subcellularLocation>
</comment>
<comment type="PTM">
    <text evidence="1">Contains an active site 4-methylidene-imidazol-5-one (MIO), which is formed autocatalytically by cyclization and dehydration of residues Ala-Ser-Gly.</text>
</comment>
<comment type="similarity">
    <text evidence="1">Belongs to the PAL/histidase family.</text>
</comment>
<gene>
    <name evidence="1" type="primary">hutH</name>
    <name type="ordered locus">BamMC406_2088</name>
</gene>
<protein>
    <recommendedName>
        <fullName evidence="1">Histidine ammonia-lyase</fullName>
        <shortName evidence="1">Histidase</shortName>
        <ecNumber evidence="1">4.3.1.3</ecNumber>
    </recommendedName>
</protein>
<reference key="1">
    <citation type="submission" date="2008-04" db="EMBL/GenBank/DDBJ databases">
        <title>Complete sequence of chromosome 1 of Burkholderia ambifaria MC40-6.</title>
        <authorList>
            <person name="Copeland A."/>
            <person name="Lucas S."/>
            <person name="Lapidus A."/>
            <person name="Glavina del Rio T."/>
            <person name="Dalin E."/>
            <person name="Tice H."/>
            <person name="Pitluck S."/>
            <person name="Chain P."/>
            <person name="Malfatti S."/>
            <person name="Shin M."/>
            <person name="Vergez L."/>
            <person name="Lang D."/>
            <person name="Schmutz J."/>
            <person name="Larimer F."/>
            <person name="Land M."/>
            <person name="Hauser L."/>
            <person name="Kyrpides N."/>
            <person name="Lykidis A."/>
            <person name="Ramette A."/>
            <person name="Konstantinidis K."/>
            <person name="Tiedje J."/>
            <person name="Richardson P."/>
        </authorList>
    </citation>
    <scope>NUCLEOTIDE SEQUENCE [LARGE SCALE GENOMIC DNA]</scope>
    <source>
        <strain>MC40-6</strain>
    </source>
</reference>
<organism>
    <name type="scientific">Burkholderia ambifaria (strain MC40-6)</name>
    <dbReference type="NCBI Taxonomy" id="398577"/>
    <lineage>
        <taxon>Bacteria</taxon>
        <taxon>Pseudomonadati</taxon>
        <taxon>Pseudomonadota</taxon>
        <taxon>Betaproteobacteria</taxon>
        <taxon>Burkholderiales</taxon>
        <taxon>Burkholderiaceae</taxon>
        <taxon>Burkholderia</taxon>
        <taxon>Burkholderia cepacia complex</taxon>
    </lineage>
</organism>
<proteinExistence type="inferred from homology"/>
<sequence length="507" mass="53305">MITLTPGHLTLPQLRKIAREPVQLTLDPASFAKIDAGAKAVADIAAKGEPAYGINTGFGRLASTHIPHDQLELLQKNLVLSHAVGVGEPMARSSVRLLMALKLSSLGRGHSGIRREVMDALITLFNADVLPLIPVKGSVGASGDLAPLAHMSAVLLGVGEVFIRGERASALDGLRVAGLAPLTLQAKEGLALLNGTQASTALALDNMFSIEDLYRTALVAGALSVDAAAGSVKPFDARIHELRGHRGQIEAAAAYRDLLDGSPINQSHRDCDKVQDPYSLRCQPQVMGACLDQMRHAADVLLIEANAVSDNPLIFPDTGEVLSGGNFHAEPVAFAADNLALAAAEIGALAERRIALLIDATLSGLPPFLVKDGGVNSGFMIAHVTAAALASENKTLAHPASVDSLPTSANQEDHVSMATFAARKLADIADNTKYILAIELLAAAQGVDLRAPYHTSPKLAPVMETIRSHVAHYELDHYFAPDIAVIAKLVGERAFAKAAPFSFASEQ</sequence>
<accession>B1YT80</accession>
<feature type="chain" id="PRO_1000100435" description="Histidine ammonia-lyase">
    <location>
        <begin position="1"/>
        <end position="507"/>
    </location>
</feature>
<feature type="modified residue" description="2,3-didehydroalanine (Ser)" evidence="1">
    <location>
        <position position="142"/>
    </location>
</feature>
<feature type="cross-link" description="5-imidazolinone (Ala-Gly)" evidence="1">
    <location>
        <begin position="141"/>
        <end position="143"/>
    </location>
</feature>
<evidence type="ECO:0000255" key="1">
    <source>
        <dbReference type="HAMAP-Rule" id="MF_00229"/>
    </source>
</evidence>
<dbReference type="EC" id="4.3.1.3" evidence="1"/>
<dbReference type="EMBL" id="CP001025">
    <property type="protein sequence ID" value="ACB64569.1"/>
    <property type="molecule type" value="Genomic_DNA"/>
</dbReference>
<dbReference type="RefSeq" id="WP_012364261.1">
    <property type="nucleotide sequence ID" value="NC_010551.1"/>
</dbReference>
<dbReference type="SMR" id="B1YT80"/>
<dbReference type="KEGG" id="bac:BamMC406_2088"/>
<dbReference type="HOGENOM" id="CLU_014801_4_0_4"/>
<dbReference type="OrthoDB" id="9806955at2"/>
<dbReference type="UniPathway" id="UPA00379">
    <property type="reaction ID" value="UER00549"/>
</dbReference>
<dbReference type="Proteomes" id="UP000001680">
    <property type="component" value="Chromosome 1"/>
</dbReference>
<dbReference type="GO" id="GO:0005737">
    <property type="term" value="C:cytoplasm"/>
    <property type="evidence" value="ECO:0007669"/>
    <property type="project" value="UniProtKB-SubCell"/>
</dbReference>
<dbReference type="GO" id="GO:0004397">
    <property type="term" value="F:histidine ammonia-lyase activity"/>
    <property type="evidence" value="ECO:0007669"/>
    <property type="project" value="UniProtKB-UniRule"/>
</dbReference>
<dbReference type="GO" id="GO:0019556">
    <property type="term" value="P:L-histidine catabolic process to glutamate and formamide"/>
    <property type="evidence" value="ECO:0007669"/>
    <property type="project" value="UniProtKB-UniPathway"/>
</dbReference>
<dbReference type="GO" id="GO:0019557">
    <property type="term" value="P:L-histidine catabolic process to glutamate and formate"/>
    <property type="evidence" value="ECO:0007669"/>
    <property type="project" value="UniProtKB-UniPathway"/>
</dbReference>
<dbReference type="CDD" id="cd00332">
    <property type="entry name" value="PAL-HAL"/>
    <property type="match status" value="1"/>
</dbReference>
<dbReference type="FunFam" id="1.10.275.10:FF:000005">
    <property type="entry name" value="Histidine ammonia-lyase"/>
    <property type="match status" value="1"/>
</dbReference>
<dbReference type="FunFam" id="1.20.200.10:FF:000003">
    <property type="entry name" value="Histidine ammonia-lyase"/>
    <property type="match status" value="1"/>
</dbReference>
<dbReference type="Gene3D" id="1.20.200.10">
    <property type="entry name" value="Fumarase/aspartase (Central domain)"/>
    <property type="match status" value="1"/>
</dbReference>
<dbReference type="Gene3D" id="1.10.275.10">
    <property type="entry name" value="Fumarase/aspartase (N-terminal domain)"/>
    <property type="match status" value="1"/>
</dbReference>
<dbReference type="HAMAP" id="MF_00229">
    <property type="entry name" value="His_ammonia_lyase"/>
    <property type="match status" value="1"/>
</dbReference>
<dbReference type="InterPro" id="IPR001106">
    <property type="entry name" value="Aromatic_Lyase"/>
</dbReference>
<dbReference type="InterPro" id="IPR024083">
    <property type="entry name" value="Fumarase/histidase_N"/>
</dbReference>
<dbReference type="InterPro" id="IPR005921">
    <property type="entry name" value="HutH"/>
</dbReference>
<dbReference type="InterPro" id="IPR008948">
    <property type="entry name" value="L-Aspartase-like"/>
</dbReference>
<dbReference type="InterPro" id="IPR022313">
    <property type="entry name" value="Phe/His_NH3-lyase_AS"/>
</dbReference>
<dbReference type="NCBIfam" id="TIGR01225">
    <property type="entry name" value="hutH"/>
    <property type="match status" value="1"/>
</dbReference>
<dbReference type="NCBIfam" id="NF006871">
    <property type="entry name" value="PRK09367.1"/>
    <property type="match status" value="1"/>
</dbReference>
<dbReference type="PANTHER" id="PTHR10362">
    <property type="entry name" value="HISTIDINE AMMONIA-LYASE"/>
    <property type="match status" value="1"/>
</dbReference>
<dbReference type="Pfam" id="PF00221">
    <property type="entry name" value="Lyase_aromatic"/>
    <property type="match status" value="1"/>
</dbReference>
<dbReference type="SUPFAM" id="SSF48557">
    <property type="entry name" value="L-aspartase-like"/>
    <property type="match status" value="1"/>
</dbReference>
<dbReference type="PROSITE" id="PS00488">
    <property type="entry name" value="PAL_HISTIDASE"/>
    <property type="match status" value="1"/>
</dbReference>